<sequence>MILEHVLVLSAYLFSIGIYGLITSRNMVRALMCLELILNSVNLNFVTFSDFFDSRQLKGDIFSIFIIAIAAAEAAIGLAIVSSIYRNRKSIRINQSNLLNK</sequence>
<comment type="function">
    <text evidence="1">NDH shuttles electrons from NAD(P)H:plastoquinone, via FMN and iron-sulfur (Fe-S) centers, to quinones in the photosynthetic chain and possibly in a chloroplast respiratory chain. The immediate electron acceptor for the enzyme in this species is believed to be plastoquinone. Couples the redox reaction to proton translocation, and thus conserves the redox energy in a proton gradient.</text>
</comment>
<comment type="catalytic activity">
    <reaction evidence="1">
        <text>a plastoquinone + NADH + (n+1) H(+)(in) = a plastoquinol + NAD(+) + n H(+)(out)</text>
        <dbReference type="Rhea" id="RHEA:42608"/>
        <dbReference type="Rhea" id="RHEA-COMP:9561"/>
        <dbReference type="Rhea" id="RHEA-COMP:9562"/>
        <dbReference type="ChEBI" id="CHEBI:15378"/>
        <dbReference type="ChEBI" id="CHEBI:17757"/>
        <dbReference type="ChEBI" id="CHEBI:57540"/>
        <dbReference type="ChEBI" id="CHEBI:57945"/>
        <dbReference type="ChEBI" id="CHEBI:62192"/>
    </reaction>
</comment>
<comment type="catalytic activity">
    <reaction evidence="1">
        <text>a plastoquinone + NADPH + (n+1) H(+)(in) = a plastoquinol + NADP(+) + n H(+)(out)</text>
        <dbReference type="Rhea" id="RHEA:42612"/>
        <dbReference type="Rhea" id="RHEA-COMP:9561"/>
        <dbReference type="Rhea" id="RHEA-COMP:9562"/>
        <dbReference type="ChEBI" id="CHEBI:15378"/>
        <dbReference type="ChEBI" id="CHEBI:17757"/>
        <dbReference type="ChEBI" id="CHEBI:57783"/>
        <dbReference type="ChEBI" id="CHEBI:58349"/>
        <dbReference type="ChEBI" id="CHEBI:62192"/>
    </reaction>
</comment>
<comment type="subunit">
    <text evidence="1">NDH is composed of at least 16 different subunits, 5 of which are encoded in the nucleus.</text>
</comment>
<comment type="subcellular location">
    <subcellularLocation>
        <location evidence="1">Plastid</location>
        <location evidence="1">Chloroplast thylakoid membrane</location>
        <topology evidence="1">Multi-pass membrane protein</topology>
    </subcellularLocation>
</comment>
<comment type="similarity">
    <text evidence="1">Belongs to the complex I subunit 4L family.</text>
</comment>
<gene>
    <name evidence="1" type="primary">ndhE</name>
</gene>
<keyword id="KW-0150">Chloroplast</keyword>
<keyword id="KW-0472">Membrane</keyword>
<keyword id="KW-0520">NAD</keyword>
<keyword id="KW-0521">NADP</keyword>
<keyword id="KW-0934">Plastid</keyword>
<keyword id="KW-0618">Plastoquinone</keyword>
<keyword id="KW-0874">Quinone</keyword>
<keyword id="KW-0793">Thylakoid</keyword>
<keyword id="KW-1278">Translocase</keyword>
<keyword id="KW-0812">Transmembrane</keyword>
<keyword id="KW-1133">Transmembrane helix</keyword>
<keyword id="KW-0813">Transport</keyword>
<name>NU4LC_OENEH</name>
<geneLocation type="chloroplast"/>
<protein>
    <recommendedName>
        <fullName evidence="1">NAD(P)H-quinone oxidoreductase subunit 4L, chloroplastic</fullName>
        <ecNumber evidence="1">7.1.1.-</ecNumber>
    </recommendedName>
    <alternativeName>
        <fullName evidence="1">NAD(P)H dehydrogenase subunit 4L</fullName>
    </alternativeName>
    <alternativeName>
        <fullName evidence="1">NADH-plastoquinone oxidoreductase subunit 4L</fullName>
    </alternativeName>
</protein>
<reference key="1">
    <citation type="journal article" date="2000" name="Mol. Gen. Genet.">
        <title>Complete nucleotide sequence of the Oenothera elata plastid chromosome, representing plastome I of the five distinguishable Euoenothera plastomes.</title>
        <authorList>
            <person name="Hupfer H."/>
            <person name="Swiatek M."/>
            <person name="Hornung S."/>
            <person name="Herrmann R.G."/>
            <person name="Maier R.M."/>
            <person name="Chiu W.-L."/>
            <person name="Sears B."/>
        </authorList>
    </citation>
    <scope>NUCLEOTIDE SEQUENCE [LARGE SCALE GENOMIC DNA]</scope>
    <source>
        <strain>cv. Johansen</strain>
    </source>
</reference>
<proteinExistence type="inferred from homology"/>
<feature type="chain" id="PRO_0000118512" description="NAD(P)H-quinone oxidoreductase subunit 4L, chloroplastic">
    <location>
        <begin position="1"/>
        <end position="101"/>
    </location>
</feature>
<feature type="transmembrane region" description="Helical" evidence="1">
    <location>
        <begin position="2"/>
        <end position="22"/>
    </location>
</feature>
<feature type="transmembrane region" description="Helical" evidence="1">
    <location>
        <begin position="32"/>
        <end position="52"/>
    </location>
</feature>
<feature type="transmembrane region" description="Helical" evidence="1">
    <location>
        <begin position="61"/>
        <end position="81"/>
    </location>
</feature>
<organism>
    <name type="scientific">Oenothera elata subsp. hookeri</name>
    <name type="common">Hooker's evening primrose</name>
    <name type="synonym">Oenothera hookeri</name>
    <dbReference type="NCBI Taxonomy" id="85636"/>
    <lineage>
        <taxon>Eukaryota</taxon>
        <taxon>Viridiplantae</taxon>
        <taxon>Streptophyta</taxon>
        <taxon>Embryophyta</taxon>
        <taxon>Tracheophyta</taxon>
        <taxon>Spermatophyta</taxon>
        <taxon>Magnoliopsida</taxon>
        <taxon>eudicotyledons</taxon>
        <taxon>Gunneridae</taxon>
        <taxon>Pentapetalae</taxon>
        <taxon>rosids</taxon>
        <taxon>malvids</taxon>
        <taxon>Myrtales</taxon>
        <taxon>Onagraceae</taxon>
        <taxon>Onagroideae</taxon>
        <taxon>Onagreae</taxon>
        <taxon>Oenothera</taxon>
    </lineage>
</organism>
<accession>Q9MTI0</accession>
<dbReference type="EC" id="7.1.1.-" evidence="1"/>
<dbReference type="EMBL" id="AJ271079">
    <property type="protein sequence ID" value="CAB67222.1"/>
    <property type="molecule type" value="Genomic_DNA"/>
</dbReference>
<dbReference type="RefSeq" id="NP_084753.1">
    <property type="nucleotide sequence ID" value="NC_002693.2"/>
</dbReference>
<dbReference type="SMR" id="Q9MTI0"/>
<dbReference type="GeneID" id="802779"/>
<dbReference type="GO" id="GO:0009535">
    <property type="term" value="C:chloroplast thylakoid membrane"/>
    <property type="evidence" value="ECO:0007669"/>
    <property type="project" value="UniProtKB-SubCell"/>
</dbReference>
<dbReference type="GO" id="GO:0030964">
    <property type="term" value="C:NADH dehydrogenase complex"/>
    <property type="evidence" value="ECO:0007669"/>
    <property type="project" value="TreeGrafter"/>
</dbReference>
<dbReference type="GO" id="GO:0016655">
    <property type="term" value="F:oxidoreductase activity, acting on NAD(P)H, quinone or similar compound as acceptor"/>
    <property type="evidence" value="ECO:0007669"/>
    <property type="project" value="UniProtKB-UniRule"/>
</dbReference>
<dbReference type="GO" id="GO:0048038">
    <property type="term" value="F:quinone binding"/>
    <property type="evidence" value="ECO:0007669"/>
    <property type="project" value="UniProtKB-KW"/>
</dbReference>
<dbReference type="GO" id="GO:0042773">
    <property type="term" value="P:ATP synthesis coupled electron transport"/>
    <property type="evidence" value="ECO:0007669"/>
    <property type="project" value="InterPro"/>
</dbReference>
<dbReference type="GO" id="GO:0019684">
    <property type="term" value="P:photosynthesis, light reaction"/>
    <property type="evidence" value="ECO:0007669"/>
    <property type="project" value="UniProtKB-UniRule"/>
</dbReference>
<dbReference type="FunFam" id="1.10.287.3510:FF:000001">
    <property type="entry name" value="NADH-quinone oxidoreductase subunit K"/>
    <property type="match status" value="1"/>
</dbReference>
<dbReference type="Gene3D" id="1.10.287.3510">
    <property type="match status" value="1"/>
</dbReference>
<dbReference type="HAMAP" id="MF_01456">
    <property type="entry name" value="NDH1_NuoK"/>
    <property type="match status" value="1"/>
</dbReference>
<dbReference type="InterPro" id="IPR001133">
    <property type="entry name" value="NADH_UbQ_OxRdtase_chain4L/K"/>
</dbReference>
<dbReference type="InterPro" id="IPR039428">
    <property type="entry name" value="NUOK/Mnh_C1-like"/>
</dbReference>
<dbReference type="NCBIfam" id="NF004320">
    <property type="entry name" value="PRK05715.1-2"/>
    <property type="match status" value="1"/>
</dbReference>
<dbReference type="NCBIfam" id="NF004322">
    <property type="entry name" value="PRK05715.1-4"/>
    <property type="match status" value="1"/>
</dbReference>
<dbReference type="NCBIfam" id="NF004323">
    <property type="entry name" value="PRK05715.1-5"/>
    <property type="match status" value="1"/>
</dbReference>
<dbReference type="PANTHER" id="PTHR11434:SF16">
    <property type="entry name" value="NADH-UBIQUINONE OXIDOREDUCTASE CHAIN 4L"/>
    <property type="match status" value="1"/>
</dbReference>
<dbReference type="PANTHER" id="PTHR11434">
    <property type="entry name" value="NADH-UBIQUINONE OXIDOREDUCTASE SUBUNIT ND4L"/>
    <property type="match status" value="1"/>
</dbReference>
<dbReference type="Pfam" id="PF00420">
    <property type="entry name" value="Oxidored_q2"/>
    <property type="match status" value="1"/>
</dbReference>
<evidence type="ECO:0000255" key="1">
    <source>
        <dbReference type="HAMAP-Rule" id="MF_01456"/>
    </source>
</evidence>